<proteinExistence type="evidence at protein level"/>
<accession>A4KA55</accession>
<protein>
    <recommendedName>
        <fullName>Profilin-6</fullName>
    </recommendedName>
    <alternativeName>
        <fullName>Pollen allergen Zea m 12</fullName>
    </alternativeName>
    <alternativeName>
        <fullName>Pollen profilin variant 1</fullName>
    </alternativeName>
    <allergenName>Zea m 12</allergenName>
</protein>
<reference key="1">
    <citation type="journal article" date="2012" name="PLoS ONE">
        <title>Characterization of profilin polymorphism in pollen with a focus on multifunctionality.</title>
        <authorList>
            <person name="Jimenez-Lopez J.C."/>
            <person name="Morales S."/>
            <person name="Castro A.J."/>
            <person name="Volkmann D."/>
            <person name="Rodriguez-Garcia M.I."/>
            <person name="Alche Jde D."/>
        </authorList>
    </citation>
    <scope>NUCLEOTIDE SEQUENCE [MRNA]</scope>
    <scope>POLYMORPHISM</scope>
    <source>
        <strain>cv. Birko</strain>
    </source>
</reference>
<reference key="2">
    <citation type="journal article" date="2013" name="PLoS ONE">
        <title>Analysis of the effects of polymorphism on pollen profilin structural functionality and the generation of conformational, T- and B-cell epitopes.</title>
        <authorList>
            <person name="Jimenez-Lopez J.C."/>
            <person name="Rodriguez-Garcia M.I."/>
            <person name="Alche J.D."/>
        </authorList>
    </citation>
    <scope>3D-STRUCTURE MODELING</scope>
    <scope>DISULFIDE BOND</scope>
</reference>
<comment type="function">
    <text evidence="1">Binds to actin and affects the structure of the cytoskeleton. At high concentrations, profilin prevents the polymerization of actin, whereas it enhances it at low concentrations (By similarity).</text>
</comment>
<comment type="subunit">
    <text evidence="1">Occurs in many kinds of cells as a complex with monomeric actin in a 1:1 ratio.</text>
</comment>
<comment type="subcellular location">
    <subcellularLocation>
        <location evidence="1">Cytoplasm</location>
        <location evidence="1">Cytoskeleton</location>
    </subcellularLocation>
</comment>
<comment type="PTM">
    <text evidence="1">Phosphorylated by MAP kinases.</text>
</comment>
<comment type="polymorphism">
    <text>Several isoforms of the allergen exist due to polymorphism.</text>
</comment>
<comment type="allergen">
    <text>Causes an allergic reaction in human.</text>
</comment>
<comment type="miscellaneous">
    <text evidence="3">The variability of the residues taking part of IgE-binding epitopes might be responsible of the difference in cross-reactivity among olive pollen cultivars, and between distantly related pollen species, leading to a variable range of allergy reactions among atopic patients.</text>
</comment>
<comment type="similarity">
    <text evidence="2">Belongs to the profilin family.</text>
</comment>
<keyword id="KW-0009">Actin-binding</keyword>
<keyword id="KW-0020">Allergen</keyword>
<keyword id="KW-0963">Cytoplasm</keyword>
<keyword id="KW-0206">Cytoskeleton</keyword>
<keyword id="KW-1015">Disulfide bond</keyword>
<keyword id="KW-0597">Phosphoprotein</keyword>
<keyword id="KW-1185">Reference proteome</keyword>
<evidence type="ECO:0000250" key="1"/>
<evidence type="ECO:0000305" key="2"/>
<evidence type="ECO:0000305" key="3">
    <source>
    </source>
</evidence>
<organism>
    <name type="scientific">Zea mays</name>
    <name type="common">Maize</name>
    <dbReference type="NCBI Taxonomy" id="4577"/>
    <lineage>
        <taxon>Eukaryota</taxon>
        <taxon>Viridiplantae</taxon>
        <taxon>Streptophyta</taxon>
        <taxon>Embryophyta</taxon>
        <taxon>Tracheophyta</taxon>
        <taxon>Spermatophyta</taxon>
        <taxon>Magnoliopsida</taxon>
        <taxon>Liliopsida</taxon>
        <taxon>Poales</taxon>
        <taxon>Poaceae</taxon>
        <taxon>PACMAD clade</taxon>
        <taxon>Panicoideae</taxon>
        <taxon>Andropogonodae</taxon>
        <taxon>Andropogoneae</taxon>
        <taxon>Tripsacinae</taxon>
        <taxon>Zea</taxon>
    </lineage>
</organism>
<dbReference type="EMBL" id="DQ663559">
    <property type="protein sequence ID" value="ABG81312.1"/>
    <property type="molecule type" value="mRNA"/>
</dbReference>
<dbReference type="SMR" id="A4KA55"/>
<dbReference type="STRING" id="4577.A4KA55"/>
<dbReference type="Allergome" id="682">
    <property type="allergen name" value="Zea m 12"/>
</dbReference>
<dbReference type="InParanoid" id="A4KA55"/>
<dbReference type="Proteomes" id="UP000007305">
    <property type="component" value="Unplaced"/>
</dbReference>
<dbReference type="ExpressionAtlas" id="A4KA55">
    <property type="expression patterns" value="baseline and differential"/>
</dbReference>
<dbReference type="GO" id="GO:0005938">
    <property type="term" value="C:cell cortex"/>
    <property type="evidence" value="ECO:0000318"/>
    <property type="project" value="GO_Central"/>
</dbReference>
<dbReference type="GO" id="GO:0005856">
    <property type="term" value="C:cytoskeleton"/>
    <property type="evidence" value="ECO:0007669"/>
    <property type="project" value="UniProtKB-SubCell"/>
</dbReference>
<dbReference type="GO" id="GO:0003785">
    <property type="term" value="F:actin monomer binding"/>
    <property type="evidence" value="ECO:0000318"/>
    <property type="project" value="GO_Central"/>
</dbReference>
<dbReference type="GO" id="GO:0070064">
    <property type="term" value="F:proline-rich region binding"/>
    <property type="evidence" value="ECO:0007669"/>
    <property type="project" value="UniProtKB-ARBA"/>
</dbReference>
<dbReference type="GO" id="GO:0007097">
    <property type="term" value="P:nuclear migration"/>
    <property type="evidence" value="ECO:0007669"/>
    <property type="project" value="UniProtKB-ARBA"/>
</dbReference>
<dbReference type="GO" id="GO:0032956">
    <property type="term" value="P:regulation of actin cytoskeleton organization"/>
    <property type="evidence" value="ECO:0007669"/>
    <property type="project" value="UniProtKB-ARBA"/>
</dbReference>
<dbReference type="CDD" id="cd00148">
    <property type="entry name" value="PROF"/>
    <property type="match status" value="1"/>
</dbReference>
<dbReference type="FunFam" id="3.30.450.30:FF:000001">
    <property type="entry name" value="Profilin"/>
    <property type="match status" value="1"/>
</dbReference>
<dbReference type="Gene3D" id="3.30.450.30">
    <property type="entry name" value="Dynein light chain 2a, cytoplasmic"/>
    <property type="match status" value="1"/>
</dbReference>
<dbReference type="InterPro" id="IPR048278">
    <property type="entry name" value="PFN"/>
</dbReference>
<dbReference type="InterPro" id="IPR005455">
    <property type="entry name" value="PFN_euk"/>
</dbReference>
<dbReference type="InterPro" id="IPR036140">
    <property type="entry name" value="PFN_sf"/>
</dbReference>
<dbReference type="InterPro" id="IPR027310">
    <property type="entry name" value="Profilin_CS"/>
</dbReference>
<dbReference type="PANTHER" id="PTHR11604">
    <property type="entry name" value="PROFILIN"/>
    <property type="match status" value="1"/>
</dbReference>
<dbReference type="PANTHER" id="PTHR11604:SF51">
    <property type="entry name" value="PROFILIN-A"/>
    <property type="match status" value="1"/>
</dbReference>
<dbReference type="Pfam" id="PF00235">
    <property type="entry name" value="Profilin"/>
    <property type="match status" value="1"/>
</dbReference>
<dbReference type="PRINTS" id="PR00392">
    <property type="entry name" value="PROFILIN"/>
</dbReference>
<dbReference type="PRINTS" id="PR01640">
    <property type="entry name" value="PROFILINPLNT"/>
</dbReference>
<dbReference type="SMART" id="SM00392">
    <property type="entry name" value="PROF"/>
    <property type="match status" value="1"/>
</dbReference>
<dbReference type="SUPFAM" id="SSF55770">
    <property type="entry name" value="Profilin (actin-binding protein)"/>
    <property type="match status" value="1"/>
</dbReference>
<dbReference type="PROSITE" id="PS00414">
    <property type="entry name" value="PROFILIN"/>
    <property type="match status" value="1"/>
</dbReference>
<feature type="initiator methionine" description="Removed" evidence="1">
    <location>
        <position position="1"/>
    </location>
</feature>
<feature type="chain" id="PRO_0000425065" description="Profilin-6">
    <location>
        <begin position="2"/>
        <end position="131"/>
    </location>
</feature>
<feature type="short sequence motif" description="Involved in PIP2 interaction">
    <location>
        <begin position="81"/>
        <end position="97"/>
    </location>
</feature>
<feature type="modified residue" description="Phosphothreonine" evidence="1">
    <location>
        <position position="111"/>
    </location>
</feature>
<feature type="disulfide bond" evidence="3">
    <location>
        <begin position="13"/>
        <end position="115"/>
    </location>
</feature>
<sequence length="131" mass="14236">MSWQTYVDEHLMCEIEGHHLSSAAIVGHDGAVWAQSTAFPQFKPEEMTNIIKDFDEPGFLAPIGLFLGPTKYMVIQGEPGAVIRGKKGSGGITVKKTGQALVIGIYDEPMTPGQCNMVVERLGDYLVKQGL</sequence>
<name>PROF6_MAIZE</name>